<feature type="transit peptide" description="Amyloplast" evidence="2">
    <location>
        <begin position="1"/>
        <end position="58"/>
    </location>
</feature>
<feature type="chain" id="PRO_0000440619" description="Tuliposide B-converting enzyme 1, amyloplastic">
    <location>
        <begin position="59"/>
        <end position="440"/>
    </location>
</feature>
<feature type="active site" description="Acyl-ester intermediate" evidence="1">
    <location>
        <position position="232"/>
    </location>
</feature>
<feature type="active site" description="Charge relay system" evidence="1">
    <location>
        <position position="325"/>
    </location>
</feature>
<feature type="active site" description="Charge relay system" evidence="1">
    <location>
        <position position="357"/>
    </location>
</feature>
<dbReference type="EC" id="4.2.99.23" evidence="2"/>
<dbReference type="EMBL" id="AB828597">
    <property type="protein sequence ID" value="BAR97239.1"/>
    <property type="molecule type" value="mRNA"/>
</dbReference>
<dbReference type="EMBL" id="AB829723">
    <property type="protein sequence ID" value="BAR97240.1"/>
    <property type="molecule type" value="mRNA"/>
</dbReference>
<dbReference type="SMR" id="A0A0H5BMX5"/>
<dbReference type="ESTHER" id="tulge-a0a0h5bmx5">
    <property type="family name" value="Plant_carboxylesterase"/>
</dbReference>
<dbReference type="KEGG" id="ag:BAR97239"/>
<dbReference type="GO" id="GO:0009501">
    <property type="term" value="C:amyloplast"/>
    <property type="evidence" value="ECO:0007669"/>
    <property type="project" value="UniProtKB-SubCell"/>
</dbReference>
<dbReference type="GO" id="GO:0016787">
    <property type="term" value="F:hydrolase activity"/>
    <property type="evidence" value="ECO:0007669"/>
    <property type="project" value="InterPro"/>
</dbReference>
<dbReference type="GO" id="GO:0016829">
    <property type="term" value="F:lyase activity"/>
    <property type="evidence" value="ECO:0007669"/>
    <property type="project" value="UniProtKB-KW"/>
</dbReference>
<dbReference type="GO" id="GO:0006952">
    <property type="term" value="P:defense response"/>
    <property type="evidence" value="ECO:0007669"/>
    <property type="project" value="UniProtKB-KW"/>
</dbReference>
<dbReference type="Gene3D" id="3.40.50.1820">
    <property type="entry name" value="alpha/beta hydrolase"/>
    <property type="match status" value="1"/>
</dbReference>
<dbReference type="InterPro" id="IPR013094">
    <property type="entry name" value="AB_hydrolase_3"/>
</dbReference>
<dbReference type="InterPro" id="IPR029058">
    <property type="entry name" value="AB_hydrolase_fold"/>
</dbReference>
<dbReference type="InterPro" id="IPR050466">
    <property type="entry name" value="Carboxylest/Gibb_receptor"/>
</dbReference>
<dbReference type="InterPro" id="IPR033140">
    <property type="entry name" value="Lipase_GDXG_put_SER_AS"/>
</dbReference>
<dbReference type="PANTHER" id="PTHR23024">
    <property type="entry name" value="ARYLACETAMIDE DEACETYLASE"/>
    <property type="match status" value="1"/>
</dbReference>
<dbReference type="PANTHER" id="PTHR23024:SF577">
    <property type="entry name" value="CARBOXYLESTERASE 2-RELATED"/>
    <property type="match status" value="1"/>
</dbReference>
<dbReference type="Pfam" id="PF07859">
    <property type="entry name" value="Abhydrolase_3"/>
    <property type="match status" value="1"/>
</dbReference>
<dbReference type="SUPFAM" id="SSF53474">
    <property type="entry name" value="alpha/beta-Hydrolases"/>
    <property type="match status" value="1"/>
</dbReference>
<dbReference type="PROSITE" id="PS01174">
    <property type="entry name" value="LIPASE_GDXG_SER"/>
    <property type="match status" value="1"/>
</dbReference>
<comment type="function">
    <text evidence="2">Lactone-forming carboxylesterase, specifically catalyzing intramolecular transesterification, but not hydrolysis. Involved in the biosynthesis of tulipalins, defensive chemicals that show antimicrobial activities against a broad range of strains of bacteria and fungi. Substrates are 6-tuliposide B &gt; 6-tuliposide A.</text>
</comment>
<comment type="catalytic activity">
    <reaction evidence="2">
        <text>6-tuliposide B = tulipalin B + D-glucose</text>
        <dbReference type="Rhea" id="RHEA:38655"/>
        <dbReference type="ChEBI" id="CHEBI:4167"/>
        <dbReference type="ChEBI" id="CHEBI:87123"/>
        <dbReference type="ChEBI" id="CHEBI:87124"/>
        <dbReference type="EC" id="4.2.99.23"/>
    </reaction>
</comment>
<comment type="activity regulation">
    <text evidence="2">Inhibited by Ag(+), Cu(2+), Fe(2+), Hg(2+), V(3+) and phenylmethylsulfonyl fluoride (PMSF).</text>
</comment>
<comment type="biophysicochemical properties">
    <kinetics>
        <KM evidence="2">3 mM for 6-tuliposide A</KM>
        <KM evidence="2">6.8 mM for 6-tuliposide B</KM>
        <text evidence="2">kcat is 8.7 sec(-1) with 6-tuliposide A as substrate. kcat is 2000 sec(-1) with 6-tuliposide B as substrate.</text>
    </kinetics>
    <phDependence>
        <text evidence="2">Optimum pH is 7.0-7.5.</text>
    </phDependence>
    <temperatureDependence>
        <text evidence="2">Optimum temperature is 30-40 degrees Celsius.</text>
    </temperatureDependence>
</comment>
<comment type="subunit">
    <text evidence="2">Homodimer.</text>
</comment>
<comment type="subcellular location">
    <subcellularLocation>
        <location evidence="2">Plastid</location>
    </subcellularLocation>
    <subcellularLocation>
        <location evidence="4">Plastid</location>
        <location evidence="4">Amyloplast</location>
    </subcellularLocation>
</comment>
<comment type="tissue specificity">
    <text evidence="2">Expressed in the pollen grains.</text>
</comment>
<comment type="PTM">
    <text evidence="2">Not glycosylated.</text>
</comment>
<comment type="similarity">
    <text evidence="4">Belongs to the AB hydrolase superfamily.</text>
</comment>
<accession>A0A0H5BMX5</accession>
<reference evidence="5" key="1">
    <citation type="journal article" date="2015" name="Plant J.">
        <title>Molecular identification of tuliposide B-converting enzyme: a lactone-forming carboxylesterase from the pollen of tulip.</title>
        <authorList>
            <person name="Nomura T."/>
            <person name="Murase T."/>
            <person name="Ogita S."/>
            <person name="Kato Y."/>
        </authorList>
    </citation>
    <scope>NUCLEOTIDE SEQUENCE [MRNA]</scope>
    <scope>PROTEIN SEQUENCE OF 59-71; 87-96; 220-231 AND 344-353</scope>
    <scope>FUNCTION</scope>
    <scope>CATALYTIC ACTIVITY</scope>
    <scope>BIOPHYSICOCHEMICAL PROPERTIES</scope>
    <scope>SUBCELLULAR LOCATION</scope>
    <scope>LACK OF GLYCOSYLATION</scope>
    <scope>ACTIVITY REGULATION</scope>
    <scope>TISSUE SPECIFICITY</scope>
    <source>
        <tissue evidence="5">Pollen</tissue>
    </source>
</reference>
<name>TCEB1_TULGE</name>
<gene>
    <name evidence="3" type="primary">TCEB1</name>
</gene>
<evidence type="ECO:0000250" key="1">
    <source>
        <dbReference type="UniProtKB" id="I4DST8"/>
    </source>
</evidence>
<evidence type="ECO:0000269" key="2">
    <source>
    </source>
</evidence>
<evidence type="ECO:0000303" key="3">
    <source>
    </source>
</evidence>
<evidence type="ECO:0000305" key="4"/>
<evidence type="ECO:0000312" key="5">
    <source>
        <dbReference type="EMBL" id="BAR97239.1"/>
    </source>
</evidence>
<keyword id="KW-0035">Amyloplast</keyword>
<keyword id="KW-0903">Direct protein sequencing</keyword>
<keyword id="KW-0456">Lyase</keyword>
<keyword id="KW-0611">Plant defense</keyword>
<keyword id="KW-0934">Plastid</keyword>
<keyword id="KW-0809">Transit peptide</keyword>
<sequence length="440" mass="49023">MSIVSFCSSLPAGPHGFKHGRGTRDMVHMPCIVRRTARSPAQACRLLRWNKYHCAAVPTNSSLSPSPTPLDVEIELDLEPFLIKYKSGRIERLGRFGDRTDYVEASLDPATEVTSRDAITDTGVPVRIYLPKVDDSPPNSLRVLVYFHGGAFLVEDSASPPYHNYLNNLASKANILIVSVNYRLAPEYPLPVAYDDCMEALNWVNKHSDGTGQEDWINKHGDFDHLFISGDSAGGNITHNIAMSTDAPKNIEGIALVHPYFFGKVALETELQDPTNLLLHRKLWSFITPESEGLDDPRVNPLGPTAPSLEKIKCKRAVVFVAGEDFHSERGRKYSEKLKSEFKGEVPLLCNHDGVGHVYHLSVDATEEEIESAAAWKMMTDLLKFYKDNDVVLEGSIVESLKAKTTEGIKKMKEIEKGMSERMMEQLVAFYNGKPVPYSS</sequence>
<organism evidence="5">
    <name type="scientific">Tulipa gesneriana</name>
    <name type="common">Garden tulip</name>
    <dbReference type="NCBI Taxonomy" id="13306"/>
    <lineage>
        <taxon>Eukaryota</taxon>
        <taxon>Viridiplantae</taxon>
        <taxon>Streptophyta</taxon>
        <taxon>Embryophyta</taxon>
        <taxon>Tracheophyta</taxon>
        <taxon>Spermatophyta</taxon>
        <taxon>Magnoliopsida</taxon>
        <taxon>Liliopsida</taxon>
        <taxon>Liliales</taxon>
        <taxon>Liliaceae</taxon>
        <taxon>Tulipa</taxon>
    </lineage>
</organism>
<protein>
    <recommendedName>
        <fullName evidence="3">Tuliposide B-converting enzyme 1, amyloplastic</fullName>
        <shortName evidence="3">TgTCEB1</shortName>
        <ecNumber evidence="2">4.2.99.23</ecNumber>
    </recommendedName>
</protein>
<proteinExistence type="evidence at protein level"/>